<dbReference type="EMBL" id="AP003994">
    <property type="protein sequence ID" value="BAD07522.1"/>
    <property type="molecule type" value="Genomic_DNA"/>
</dbReference>
<dbReference type="EMBL" id="AP008208">
    <property type="protein sequence ID" value="BAF09756.1"/>
    <property type="molecule type" value="Genomic_DNA"/>
</dbReference>
<dbReference type="EMBL" id="AP014958">
    <property type="protein sequence ID" value="BAS80467.1"/>
    <property type="molecule type" value="Genomic_DNA"/>
</dbReference>
<dbReference type="EMBL" id="CM000139">
    <property type="protein sequence ID" value="EEE57633.1"/>
    <property type="molecule type" value="Genomic_DNA"/>
</dbReference>
<dbReference type="EMBL" id="AK101598">
    <property type="protein sequence ID" value="BAG95144.1"/>
    <property type="molecule type" value="mRNA"/>
</dbReference>
<dbReference type="RefSeq" id="XP_015626445.1">
    <property type="nucleotide sequence ID" value="XM_015770959.1"/>
</dbReference>
<dbReference type="SMR" id="Q6ZIK7"/>
<dbReference type="FunCoup" id="Q6ZIK7">
    <property type="interactions" value="14"/>
</dbReference>
<dbReference type="PaxDb" id="39947-Q6ZIK7"/>
<dbReference type="EnsemblPlants" id="Os02t0700700-01">
    <property type="protein sequence ID" value="Os02t0700700-01"/>
    <property type="gene ID" value="Os02g0700700"/>
</dbReference>
<dbReference type="Gramene" id="Os02t0700700-01">
    <property type="protein sequence ID" value="Os02t0700700-01"/>
    <property type="gene ID" value="Os02g0700700"/>
</dbReference>
<dbReference type="KEGG" id="dosa:Os02g0700700"/>
<dbReference type="eggNOG" id="ENOG502QU4N">
    <property type="taxonomic scope" value="Eukaryota"/>
</dbReference>
<dbReference type="HOGENOM" id="CLU_033380_0_0_1"/>
<dbReference type="InParanoid" id="Q6ZIK7"/>
<dbReference type="OMA" id="YTYMRTT"/>
<dbReference type="OrthoDB" id="10250282at2759"/>
<dbReference type="PlantReactome" id="R-OSA-9826782">
    <property type="pathway name" value="Regulation of seed germination and coleoptile growth under submergence and normal gravity environment"/>
</dbReference>
<dbReference type="Proteomes" id="UP000000763">
    <property type="component" value="Chromosome 2"/>
</dbReference>
<dbReference type="Proteomes" id="UP000007752">
    <property type="component" value="Chromosome 2"/>
</dbReference>
<dbReference type="Proteomes" id="UP000059680">
    <property type="component" value="Chromosome 2"/>
</dbReference>
<dbReference type="GO" id="GO:0005634">
    <property type="term" value="C:nucleus"/>
    <property type="evidence" value="ECO:0007669"/>
    <property type="project" value="UniProtKB-SubCell"/>
</dbReference>
<dbReference type="InterPro" id="IPR013591">
    <property type="entry name" value="Brevis_radix_dom"/>
</dbReference>
<dbReference type="InterPro" id="IPR044532">
    <property type="entry name" value="BRX-like"/>
</dbReference>
<dbReference type="PANTHER" id="PTHR46058">
    <property type="entry name" value="PROTEIN BREVIS RADIX-LIKE 1"/>
    <property type="match status" value="1"/>
</dbReference>
<dbReference type="PANTHER" id="PTHR46058:SF26">
    <property type="entry name" value="PROTEIN BREVIS RADIX-LIKE 1"/>
    <property type="match status" value="1"/>
</dbReference>
<dbReference type="Pfam" id="PF08381">
    <property type="entry name" value="BRX"/>
    <property type="match status" value="2"/>
</dbReference>
<dbReference type="PROSITE" id="PS51514">
    <property type="entry name" value="BRX"/>
    <property type="match status" value="2"/>
</dbReference>
<keyword id="KW-0539">Nucleus</keyword>
<keyword id="KW-1185">Reference proteome</keyword>
<keyword id="KW-0677">Repeat</keyword>
<gene>
    <name type="primary">BRXL2</name>
    <name type="ordered locus">Os02g0700700</name>
    <name type="ordered locus">LOC_Os02g47230</name>
    <name type="ORF">OJ1111_E07.14</name>
    <name type="ORF">OsJ_08053</name>
</gene>
<feature type="chain" id="PRO_0000373827" description="Protein Brevis radix-like 2">
    <location>
        <begin position="1"/>
        <end position="411"/>
    </location>
</feature>
<feature type="domain" description="BRX 1" evidence="2">
    <location>
        <begin position="161"/>
        <end position="217"/>
    </location>
</feature>
<feature type="domain" description="BRX 2" evidence="2">
    <location>
        <begin position="356"/>
        <end position="411"/>
    </location>
</feature>
<feature type="region of interest" description="Disordered" evidence="3">
    <location>
        <begin position="10"/>
        <end position="31"/>
    </location>
</feature>
<feature type="region of interest" description="Disordered" evidence="3">
    <location>
        <begin position="103"/>
        <end position="149"/>
    </location>
</feature>
<feature type="region of interest" description="Disordered" evidence="3">
    <location>
        <begin position="245"/>
        <end position="294"/>
    </location>
</feature>
<feature type="region of interest" description="Disordered" evidence="3">
    <location>
        <begin position="324"/>
        <end position="346"/>
    </location>
</feature>
<feature type="compositionally biased region" description="Polar residues" evidence="3">
    <location>
        <begin position="20"/>
        <end position="31"/>
    </location>
</feature>
<feature type="compositionally biased region" description="Acidic residues" evidence="3">
    <location>
        <begin position="136"/>
        <end position="149"/>
    </location>
</feature>
<feature type="compositionally biased region" description="Low complexity" evidence="3">
    <location>
        <begin position="276"/>
        <end position="294"/>
    </location>
</feature>
<proteinExistence type="evidence at transcript level"/>
<reference key="1">
    <citation type="journal article" date="2005" name="Nature">
        <title>The map-based sequence of the rice genome.</title>
        <authorList>
            <consortium name="International rice genome sequencing project (IRGSP)"/>
        </authorList>
    </citation>
    <scope>NUCLEOTIDE SEQUENCE [LARGE SCALE GENOMIC DNA]</scope>
    <source>
        <strain>cv. Nipponbare</strain>
    </source>
</reference>
<reference key="2">
    <citation type="journal article" date="2008" name="Nucleic Acids Res.">
        <title>The rice annotation project database (RAP-DB): 2008 update.</title>
        <authorList>
            <consortium name="The rice annotation project (RAP)"/>
        </authorList>
    </citation>
    <scope>GENOME REANNOTATION</scope>
    <source>
        <strain>cv. Nipponbare</strain>
    </source>
</reference>
<reference key="3">
    <citation type="journal article" date="2013" name="Rice">
        <title>Improvement of the Oryza sativa Nipponbare reference genome using next generation sequence and optical map data.</title>
        <authorList>
            <person name="Kawahara Y."/>
            <person name="de la Bastide M."/>
            <person name="Hamilton J.P."/>
            <person name="Kanamori H."/>
            <person name="McCombie W.R."/>
            <person name="Ouyang S."/>
            <person name="Schwartz D.C."/>
            <person name="Tanaka T."/>
            <person name="Wu J."/>
            <person name="Zhou S."/>
            <person name="Childs K.L."/>
            <person name="Davidson R.M."/>
            <person name="Lin H."/>
            <person name="Quesada-Ocampo L."/>
            <person name="Vaillancourt B."/>
            <person name="Sakai H."/>
            <person name="Lee S.S."/>
            <person name="Kim J."/>
            <person name="Numa H."/>
            <person name="Itoh T."/>
            <person name="Buell C.R."/>
            <person name="Matsumoto T."/>
        </authorList>
    </citation>
    <scope>GENOME REANNOTATION</scope>
    <source>
        <strain>cv. Nipponbare</strain>
    </source>
</reference>
<reference key="4">
    <citation type="journal article" date="2005" name="PLoS Biol.">
        <title>The genomes of Oryza sativa: a history of duplications.</title>
        <authorList>
            <person name="Yu J."/>
            <person name="Wang J."/>
            <person name="Lin W."/>
            <person name="Li S."/>
            <person name="Li H."/>
            <person name="Zhou J."/>
            <person name="Ni P."/>
            <person name="Dong W."/>
            <person name="Hu S."/>
            <person name="Zeng C."/>
            <person name="Zhang J."/>
            <person name="Zhang Y."/>
            <person name="Li R."/>
            <person name="Xu Z."/>
            <person name="Li S."/>
            <person name="Li X."/>
            <person name="Zheng H."/>
            <person name="Cong L."/>
            <person name="Lin L."/>
            <person name="Yin J."/>
            <person name="Geng J."/>
            <person name="Li G."/>
            <person name="Shi J."/>
            <person name="Liu J."/>
            <person name="Lv H."/>
            <person name="Li J."/>
            <person name="Wang J."/>
            <person name="Deng Y."/>
            <person name="Ran L."/>
            <person name="Shi X."/>
            <person name="Wang X."/>
            <person name="Wu Q."/>
            <person name="Li C."/>
            <person name="Ren X."/>
            <person name="Wang J."/>
            <person name="Wang X."/>
            <person name="Li D."/>
            <person name="Liu D."/>
            <person name="Zhang X."/>
            <person name="Ji Z."/>
            <person name="Zhao W."/>
            <person name="Sun Y."/>
            <person name="Zhang Z."/>
            <person name="Bao J."/>
            <person name="Han Y."/>
            <person name="Dong L."/>
            <person name="Ji J."/>
            <person name="Chen P."/>
            <person name="Wu S."/>
            <person name="Liu J."/>
            <person name="Xiao Y."/>
            <person name="Bu D."/>
            <person name="Tan J."/>
            <person name="Yang L."/>
            <person name="Ye C."/>
            <person name="Zhang J."/>
            <person name="Xu J."/>
            <person name="Zhou Y."/>
            <person name="Yu Y."/>
            <person name="Zhang B."/>
            <person name="Zhuang S."/>
            <person name="Wei H."/>
            <person name="Liu B."/>
            <person name="Lei M."/>
            <person name="Yu H."/>
            <person name="Li Y."/>
            <person name="Xu H."/>
            <person name="Wei S."/>
            <person name="He X."/>
            <person name="Fang L."/>
            <person name="Zhang Z."/>
            <person name="Zhang Y."/>
            <person name="Huang X."/>
            <person name="Su Z."/>
            <person name="Tong W."/>
            <person name="Li J."/>
            <person name="Tong Z."/>
            <person name="Li S."/>
            <person name="Ye J."/>
            <person name="Wang L."/>
            <person name="Fang L."/>
            <person name="Lei T."/>
            <person name="Chen C.-S."/>
            <person name="Chen H.-C."/>
            <person name="Xu Z."/>
            <person name="Li H."/>
            <person name="Huang H."/>
            <person name="Zhang F."/>
            <person name="Xu H."/>
            <person name="Li N."/>
            <person name="Zhao C."/>
            <person name="Li S."/>
            <person name="Dong L."/>
            <person name="Huang Y."/>
            <person name="Li L."/>
            <person name="Xi Y."/>
            <person name="Qi Q."/>
            <person name="Li W."/>
            <person name="Zhang B."/>
            <person name="Hu W."/>
            <person name="Zhang Y."/>
            <person name="Tian X."/>
            <person name="Jiao Y."/>
            <person name="Liang X."/>
            <person name="Jin J."/>
            <person name="Gao L."/>
            <person name="Zheng W."/>
            <person name="Hao B."/>
            <person name="Liu S.-M."/>
            <person name="Wang W."/>
            <person name="Yuan L."/>
            <person name="Cao M."/>
            <person name="McDermott J."/>
            <person name="Samudrala R."/>
            <person name="Wang J."/>
            <person name="Wong G.K.-S."/>
            <person name="Yang H."/>
        </authorList>
    </citation>
    <scope>NUCLEOTIDE SEQUENCE [LARGE SCALE GENOMIC DNA]</scope>
    <source>
        <strain>cv. Nipponbare</strain>
    </source>
</reference>
<reference key="5">
    <citation type="journal article" date="2003" name="Science">
        <title>Collection, mapping, and annotation of over 28,000 cDNA clones from japonica rice.</title>
        <authorList>
            <consortium name="The rice full-length cDNA consortium"/>
        </authorList>
    </citation>
    <scope>NUCLEOTIDE SEQUENCE [LARGE SCALE MRNA]</scope>
    <source>
        <strain>cv. Nipponbare</strain>
    </source>
</reference>
<reference key="6">
    <citation type="journal article" date="2006" name="Plant Physiol.">
        <title>Characterization of the plant-specific BREVIS RADIX gene family reveals limited genetic redundancy despite high sequence conservation.</title>
        <authorList>
            <person name="Briggs G.C."/>
            <person name="Mouchel C.F."/>
            <person name="Hardtke C.S."/>
        </authorList>
    </citation>
    <scope>GENE FAMILY</scope>
</reference>
<sequence length="411" mass="45265">MLACIACSTKDGGEGGHRSATATPNSGKSLTSQLKDMVLKFSGSGRHQYKSGGSPSLRTSRFHRSSRLAAYPGIIDESGFTSDGAGEAYTYMRTTTASAGARAAPSTWDLPPKVNHRSFQPRVIRSPSASGVPSIGEEDYDDDDDDDDEETVLLEEDRVPREWTAQVEPGVQITFVSIPGGAGNDLKRIRFSREMFNKWEAQRWWGENYDRVVELYNVQTFSRQQGFSTPTSSVDEAMQRDSFYSRVGSTRESPAMMMPPPPPLPSSGAGREHPISRTASSKAQLSSSSSVAAARPPFYPSTAVPDPSDHVWAHHFNLLNSAAAGPAAPYDPSRGTTSSRDEASVSISNASDLEATEWVEQDEPGVSITIREFGDGTRELRRVRFSRERFGEERAKVWWEQNRDRIHAQYL</sequence>
<organism>
    <name type="scientific">Oryza sativa subsp. japonica</name>
    <name type="common">Rice</name>
    <dbReference type="NCBI Taxonomy" id="39947"/>
    <lineage>
        <taxon>Eukaryota</taxon>
        <taxon>Viridiplantae</taxon>
        <taxon>Streptophyta</taxon>
        <taxon>Embryophyta</taxon>
        <taxon>Tracheophyta</taxon>
        <taxon>Spermatophyta</taxon>
        <taxon>Magnoliopsida</taxon>
        <taxon>Liliopsida</taxon>
        <taxon>Poales</taxon>
        <taxon>Poaceae</taxon>
        <taxon>BOP clade</taxon>
        <taxon>Oryzoideae</taxon>
        <taxon>Oryzeae</taxon>
        <taxon>Oryzinae</taxon>
        <taxon>Oryza</taxon>
        <taxon>Oryza sativa</taxon>
    </lineage>
</organism>
<name>BRXL2_ORYSJ</name>
<accession>Q6ZIK7</accession>
<accession>A0A0P0VNI5</accession>
<comment type="subcellular location">
    <subcellularLocation>
        <location evidence="1">Nucleus</location>
    </subcellularLocation>
</comment>
<comment type="similarity">
    <text evidence="4">Belongs to the BRX family.</text>
</comment>
<protein>
    <recommendedName>
        <fullName>Protein Brevis radix-like 2</fullName>
        <shortName>OsBRXL2</shortName>
    </recommendedName>
</protein>
<evidence type="ECO:0000250" key="1"/>
<evidence type="ECO:0000255" key="2">
    <source>
        <dbReference type="PROSITE-ProRule" id="PRU00847"/>
    </source>
</evidence>
<evidence type="ECO:0000256" key="3">
    <source>
        <dbReference type="SAM" id="MobiDB-lite"/>
    </source>
</evidence>
<evidence type="ECO:0000305" key="4"/>